<keyword id="KW-0687">Ribonucleoprotein</keyword>
<keyword id="KW-0689">Ribosomal protein</keyword>
<keyword id="KW-0694">RNA-binding</keyword>
<keyword id="KW-0699">rRNA-binding</keyword>
<evidence type="ECO:0000255" key="1">
    <source>
        <dbReference type="HAMAP-Rule" id="MF_01341"/>
    </source>
</evidence>
<evidence type="ECO:0000256" key="2">
    <source>
        <dbReference type="SAM" id="MobiDB-lite"/>
    </source>
</evidence>
<evidence type="ECO:0000305" key="3"/>
<accession>Q6GEK2</accession>
<sequence length="146" mass="15597">MKLHELKPAEGSRKERNRVGRGVATGNGKTSGRGHKGQKARSGGGVRPGFEGGQLPLFRRLPKRGFTNINRKEYAIVNLDQLNKFEDGTEVTPALLVESGVVKNEKSGIKILGNGSLDKKLTVKAHKFSASAAEAIDAKGGAHEVI</sequence>
<gene>
    <name evidence="1" type="primary">rplO</name>
    <name type="ordered locus">SAR2316</name>
</gene>
<name>RL15_STAAR</name>
<reference key="1">
    <citation type="journal article" date="2004" name="Proc. Natl. Acad. Sci. U.S.A.">
        <title>Complete genomes of two clinical Staphylococcus aureus strains: evidence for the rapid evolution of virulence and drug resistance.</title>
        <authorList>
            <person name="Holden M.T.G."/>
            <person name="Feil E.J."/>
            <person name="Lindsay J.A."/>
            <person name="Peacock S.J."/>
            <person name="Day N.P.J."/>
            <person name="Enright M.C."/>
            <person name="Foster T.J."/>
            <person name="Moore C.E."/>
            <person name="Hurst L."/>
            <person name="Atkin R."/>
            <person name="Barron A."/>
            <person name="Bason N."/>
            <person name="Bentley S.D."/>
            <person name="Chillingworth C."/>
            <person name="Chillingworth T."/>
            <person name="Churcher C."/>
            <person name="Clark L."/>
            <person name="Corton C."/>
            <person name="Cronin A."/>
            <person name="Doggett J."/>
            <person name="Dowd L."/>
            <person name="Feltwell T."/>
            <person name="Hance Z."/>
            <person name="Harris B."/>
            <person name="Hauser H."/>
            <person name="Holroyd S."/>
            <person name="Jagels K."/>
            <person name="James K.D."/>
            <person name="Lennard N."/>
            <person name="Line A."/>
            <person name="Mayes R."/>
            <person name="Moule S."/>
            <person name="Mungall K."/>
            <person name="Ormond D."/>
            <person name="Quail M.A."/>
            <person name="Rabbinowitsch E."/>
            <person name="Rutherford K.M."/>
            <person name="Sanders M."/>
            <person name="Sharp S."/>
            <person name="Simmonds M."/>
            <person name="Stevens K."/>
            <person name="Whitehead S."/>
            <person name="Barrell B.G."/>
            <person name="Spratt B.G."/>
            <person name="Parkhill J."/>
        </authorList>
    </citation>
    <scope>NUCLEOTIDE SEQUENCE [LARGE SCALE GENOMIC DNA]</scope>
    <source>
        <strain>MRSA252</strain>
    </source>
</reference>
<feature type="chain" id="PRO_0000104809" description="Large ribosomal subunit protein uL15">
    <location>
        <begin position="1"/>
        <end position="146"/>
    </location>
</feature>
<feature type="region of interest" description="Disordered" evidence="2">
    <location>
        <begin position="1"/>
        <end position="54"/>
    </location>
</feature>
<feature type="compositionally biased region" description="Basic and acidic residues" evidence="2">
    <location>
        <begin position="1"/>
        <end position="18"/>
    </location>
</feature>
<feature type="compositionally biased region" description="Gly residues" evidence="2">
    <location>
        <begin position="42"/>
        <end position="52"/>
    </location>
</feature>
<organism>
    <name type="scientific">Staphylococcus aureus (strain MRSA252)</name>
    <dbReference type="NCBI Taxonomy" id="282458"/>
    <lineage>
        <taxon>Bacteria</taxon>
        <taxon>Bacillati</taxon>
        <taxon>Bacillota</taxon>
        <taxon>Bacilli</taxon>
        <taxon>Bacillales</taxon>
        <taxon>Staphylococcaceae</taxon>
        <taxon>Staphylococcus</taxon>
    </lineage>
</organism>
<proteinExistence type="inferred from homology"/>
<dbReference type="EMBL" id="BX571856">
    <property type="protein sequence ID" value="CAG41297.1"/>
    <property type="molecule type" value="Genomic_DNA"/>
</dbReference>
<dbReference type="RefSeq" id="WP_000766074.1">
    <property type="nucleotide sequence ID" value="NC_002952.2"/>
</dbReference>
<dbReference type="SMR" id="Q6GEK2"/>
<dbReference type="GeneID" id="98346543"/>
<dbReference type="KEGG" id="sar:SAR2316"/>
<dbReference type="HOGENOM" id="CLU_055188_4_2_9"/>
<dbReference type="Proteomes" id="UP000000596">
    <property type="component" value="Chromosome"/>
</dbReference>
<dbReference type="GO" id="GO:0022625">
    <property type="term" value="C:cytosolic large ribosomal subunit"/>
    <property type="evidence" value="ECO:0007669"/>
    <property type="project" value="TreeGrafter"/>
</dbReference>
<dbReference type="GO" id="GO:0019843">
    <property type="term" value="F:rRNA binding"/>
    <property type="evidence" value="ECO:0007669"/>
    <property type="project" value="UniProtKB-UniRule"/>
</dbReference>
<dbReference type="GO" id="GO:0003735">
    <property type="term" value="F:structural constituent of ribosome"/>
    <property type="evidence" value="ECO:0007669"/>
    <property type="project" value="InterPro"/>
</dbReference>
<dbReference type="GO" id="GO:0006412">
    <property type="term" value="P:translation"/>
    <property type="evidence" value="ECO:0007669"/>
    <property type="project" value="UniProtKB-UniRule"/>
</dbReference>
<dbReference type="FunFam" id="3.100.10.10:FF:000004">
    <property type="entry name" value="50S ribosomal protein L15"/>
    <property type="match status" value="1"/>
</dbReference>
<dbReference type="Gene3D" id="3.100.10.10">
    <property type="match status" value="1"/>
</dbReference>
<dbReference type="HAMAP" id="MF_01341">
    <property type="entry name" value="Ribosomal_uL15"/>
    <property type="match status" value="1"/>
</dbReference>
<dbReference type="InterPro" id="IPR030878">
    <property type="entry name" value="Ribosomal_uL15"/>
</dbReference>
<dbReference type="InterPro" id="IPR021131">
    <property type="entry name" value="Ribosomal_uL15/eL18"/>
</dbReference>
<dbReference type="InterPro" id="IPR036227">
    <property type="entry name" value="Ribosomal_uL15/eL18_sf"/>
</dbReference>
<dbReference type="InterPro" id="IPR005749">
    <property type="entry name" value="Ribosomal_uL15_bac-type"/>
</dbReference>
<dbReference type="InterPro" id="IPR001196">
    <property type="entry name" value="Ribosomal_uL15_CS"/>
</dbReference>
<dbReference type="NCBIfam" id="TIGR01071">
    <property type="entry name" value="rplO_bact"/>
    <property type="match status" value="1"/>
</dbReference>
<dbReference type="PANTHER" id="PTHR12934">
    <property type="entry name" value="50S RIBOSOMAL PROTEIN L15"/>
    <property type="match status" value="1"/>
</dbReference>
<dbReference type="PANTHER" id="PTHR12934:SF11">
    <property type="entry name" value="LARGE RIBOSOMAL SUBUNIT PROTEIN UL15M"/>
    <property type="match status" value="1"/>
</dbReference>
<dbReference type="Pfam" id="PF00828">
    <property type="entry name" value="Ribosomal_L27A"/>
    <property type="match status" value="1"/>
</dbReference>
<dbReference type="SUPFAM" id="SSF52080">
    <property type="entry name" value="Ribosomal proteins L15p and L18e"/>
    <property type="match status" value="1"/>
</dbReference>
<dbReference type="PROSITE" id="PS00475">
    <property type="entry name" value="RIBOSOMAL_L15"/>
    <property type="match status" value="1"/>
</dbReference>
<protein>
    <recommendedName>
        <fullName evidence="1">Large ribosomal subunit protein uL15</fullName>
    </recommendedName>
    <alternativeName>
        <fullName evidence="3">50S ribosomal protein L15</fullName>
    </alternativeName>
</protein>
<comment type="function">
    <text evidence="1">Binds to the 23S rRNA.</text>
</comment>
<comment type="subunit">
    <text evidence="1">Part of the 50S ribosomal subunit.</text>
</comment>
<comment type="similarity">
    <text evidence="1">Belongs to the universal ribosomal protein uL15 family.</text>
</comment>